<name>ISPG_NEIMF</name>
<sequence length="421" mass="45387">MNTLQRRKTHQVRIDHITVGSEAPVVIQSMTNTDTADAKATALQIKELSDAGSEMVRITVNSPEAASKVAEIRRRLDDMGYATPLIGDFHFNGERLLAEFPECGKALSKYRINPGNVGKGVKGDEKFAFMIRTAAENDKAVRIGVNWGSLDQSLAKRMMDANLASSAPKPPEEVTKEALIVSALESAEKAVLLGLPEDKIILSCKVSAVQDLIQVYRELGSRCAYPLHLGLTEAGMGSKGIVASTAALSVLLQEGIGDTIRISLTPEPGSPRTQEVVVGQEILQTMGLRSFTPMVTACPGCGRTTSTVFQELAQDVQNYLRQKMSIWRTLYPGVESLNVAVMGCVVNGPGESKLADIGISLPGTGETPVAPVYVDGERKITLKGDNIATEFLAIVEEYVKTNYGENGSKRNQNKIIPIQSL</sequence>
<reference key="1">
    <citation type="journal article" date="2007" name="PLoS Genet.">
        <title>Meningococcal genetic variation mechanisms viewed through comparative analysis of serogroup C strain FAM18.</title>
        <authorList>
            <person name="Bentley S.D."/>
            <person name="Vernikos G.S."/>
            <person name="Snyder L.A.S."/>
            <person name="Churcher C."/>
            <person name="Arrowsmith C."/>
            <person name="Chillingworth T."/>
            <person name="Cronin A."/>
            <person name="Davis P.H."/>
            <person name="Holroyd N.E."/>
            <person name="Jagels K."/>
            <person name="Maddison M."/>
            <person name="Moule S."/>
            <person name="Rabbinowitsch E."/>
            <person name="Sharp S."/>
            <person name="Unwin L."/>
            <person name="Whitehead S."/>
            <person name="Quail M.A."/>
            <person name="Achtman M."/>
            <person name="Barrell B.G."/>
            <person name="Saunders N.J."/>
            <person name="Parkhill J."/>
        </authorList>
    </citation>
    <scope>NUCLEOTIDE SEQUENCE [LARGE SCALE GENOMIC DNA]</scope>
    <source>
        <strain>ATCC 700532 / DSM 15464 / FAM18</strain>
    </source>
</reference>
<keyword id="KW-0004">4Fe-4S</keyword>
<keyword id="KW-0408">Iron</keyword>
<keyword id="KW-0411">Iron-sulfur</keyword>
<keyword id="KW-0414">Isoprene biosynthesis</keyword>
<keyword id="KW-0479">Metal-binding</keyword>
<keyword id="KW-0560">Oxidoreductase</keyword>
<evidence type="ECO:0000255" key="1">
    <source>
        <dbReference type="HAMAP-Rule" id="MF_00159"/>
    </source>
</evidence>
<organism>
    <name type="scientific">Neisseria meningitidis serogroup C / serotype 2a (strain ATCC 700532 / DSM 15464 / FAM18)</name>
    <dbReference type="NCBI Taxonomy" id="272831"/>
    <lineage>
        <taxon>Bacteria</taxon>
        <taxon>Pseudomonadati</taxon>
        <taxon>Pseudomonadota</taxon>
        <taxon>Betaproteobacteria</taxon>
        <taxon>Neisseriales</taxon>
        <taxon>Neisseriaceae</taxon>
        <taxon>Neisseria</taxon>
    </lineage>
</organism>
<protein>
    <recommendedName>
        <fullName evidence="1">4-hydroxy-3-methylbut-2-en-1-yl diphosphate synthase (flavodoxin)</fullName>
        <ecNumber evidence="1">1.17.7.3</ecNumber>
    </recommendedName>
    <alternativeName>
        <fullName evidence="1">1-hydroxy-2-methyl-2-(E)-butenyl 4-diphosphate synthase</fullName>
    </alternativeName>
</protein>
<feature type="chain" id="PRO_1000011486" description="4-hydroxy-3-methylbut-2-en-1-yl diphosphate synthase (flavodoxin)">
    <location>
        <begin position="1"/>
        <end position="421"/>
    </location>
</feature>
<feature type="binding site" evidence="1">
    <location>
        <position position="298"/>
    </location>
    <ligand>
        <name>[4Fe-4S] cluster</name>
        <dbReference type="ChEBI" id="CHEBI:49883"/>
    </ligand>
</feature>
<feature type="binding site" evidence="1">
    <location>
        <position position="301"/>
    </location>
    <ligand>
        <name>[4Fe-4S] cluster</name>
        <dbReference type="ChEBI" id="CHEBI:49883"/>
    </ligand>
</feature>
<feature type="binding site" evidence="1">
    <location>
        <position position="344"/>
    </location>
    <ligand>
        <name>[4Fe-4S] cluster</name>
        <dbReference type="ChEBI" id="CHEBI:49883"/>
    </ligand>
</feature>
<feature type="binding site" evidence="1">
    <location>
        <position position="351"/>
    </location>
    <ligand>
        <name>[4Fe-4S] cluster</name>
        <dbReference type="ChEBI" id="CHEBI:49883"/>
    </ligand>
</feature>
<dbReference type="EC" id="1.17.7.3" evidence="1"/>
<dbReference type="EMBL" id="AM421808">
    <property type="protein sequence ID" value="CAM10481.1"/>
    <property type="molecule type" value="Genomic_DNA"/>
</dbReference>
<dbReference type="RefSeq" id="WP_002213331.1">
    <property type="nucleotide sequence ID" value="NC_008767.1"/>
</dbReference>
<dbReference type="SMR" id="A1KUD8"/>
<dbReference type="KEGG" id="nmc:NMC1247"/>
<dbReference type="HOGENOM" id="CLU_042258_1_0_4"/>
<dbReference type="UniPathway" id="UPA00056">
    <property type="reaction ID" value="UER00096"/>
</dbReference>
<dbReference type="Proteomes" id="UP000002286">
    <property type="component" value="Chromosome"/>
</dbReference>
<dbReference type="GO" id="GO:0051539">
    <property type="term" value="F:4 iron, 4 sulfur cluster binding"/>
    <property type="evidence" value="ECO:0007669"/>
    <property type="project" value="UniProtKB-UniRule"/>
</dbReference>
<dbReference type="GO" id="GO:0046429">
    <property type="term" value="F:4-hydroxy-3-methylbut-2-en-1-yl diphosphate synthase activity (ferredoxin)"/>
    <property type="evidence" value="ECO:0007669"/>
    <property type="project" value="UniProtKB-UniRule"/>
</dbReference>
<dbReference type="GO" id="GO:0141197">
    <property type="term" value="F:4-hydroxy-3-methylbut-2-enyl-diphosphate synthase activity (flavodoxin)"/>
    <property type="evidence" value="ECO:0007669"/>
    <property type="project" value="UniProtKB-EC"/>
</dbReference>
<dbReference type="GO" id="GO:0005506">
    <property type="term" value="F:iron ion binding"/>
    <property type="evidence" value="ECO:0007669"/>
    <property type="project" value="InterPro"/>
</dbReference>
<dbReference type="GO" id="GO:0019288">
    <property type="term" value="P:isopentenyl diphosphate biosynthetic process, methylerythritol 4-phosphate pathway"/>
    <property type="evidence" value="ECO:0007669"/>
    <property type="project" value="UniProtKB-UniRule"/>
</dbReference>
<dbReference type="GO" id="GO:0016114">
    <property type="term" value="P:terpenoid biosynthetic process"/>
    <property type="evidence" value="ECO:0007669"/>
    <property type="project" value="InterPro"/>
</dbReference>
<dbReference type="FunFam" id="3.20.20.20:FF:000001">
    <property type="entry name" value="4-hydroxy-3-methylbut-2-en-1-yl diphosphate synthase (flavodoxin)"/>
    <property type="match status" value="1"/>
</dbReference>
<dbReference type="FunFam" id="3.30.413.10:FF:000012">
    <property type="entry name" value="4-hydroxy-3-methylbut-2-en-1-yl diphosphate synthase (flavodoxin)"/>
    <property type="match status" value="1"/>
</dbReference>
<dbReference type="Gene3D" id="3.20.20.20">
    <property type="entry name" value="Dihydropteroate synthase-like"/>
    <property type="match status" value="1"/>
</dbReference>
<dbReference type="Gene3D" id="3.30.413.10">
    <property type="entry name" value="Sulfite Reductase Hemoprotein, domain 1"/>
    <property type="match status" value="1"/>
</dbReference>
<dbReference type="HAMAP" id="MF_00159">
    <property type="entry name" value="IspG"/>
    <property type="match status" value="1"/>
</dbReference>
<dbReference type="InterPro" id="IPR011005">
    <property type="entry name" value="Dihydropteroate_synth-like_sf"/>
</dbReference>
<dbReference type="InterPro" id="IPR016425">
    <property type="entry name" value="IspG_bac"/>
</dbReference>
<dbReference type="InterPro" id="IPR004588">
    <property type="entry name" value="IspG_bac-typ"/>
</dbReference>
<dbReference type="InterPro" id="IPR045854">
    <property type="entry name" value="NO2/SO3_Rdtase_4Fe4S_sf"/>
</dbReference>
<dbReference type="NCBIfam" id="TIGR00612">
    <property type="entry name" value="ispG_gcpE"/>
    <property type="match status" value="1"/>
</dbReference>
<dbReference type="NCBIfam" id="NF001540">
    <property type="entry name" value="PRK00366.1"/>
    <property type="match status" value="1"/>
</dbReference>
<dbReference type="PANTHER" id="PTHR30454">
    <property type="entry name" value="4-HYDROXY-3-METHYLBUT-2-EN-1-YL DIPHOSPHATE SYNTHASE"/>
    <property type="match status" value="1"/>
</dbReference>
<dbReference type="PANTHER" id="PTHR30454:SF0">
    <property type="entry name" value="4-HYDROXY-3-METHYLBUT-2-EN-1-YL DIPHOSPHATE SYNTHASE (FERREDOXIN), CHLOROPLASTIC"/>
    <property type="match status" value="1"/>
</dbReference>
<dbReference type="Pfam" id="PF04551">
    <property type="entry name" value="GcpE"/>
    <property type="match status" value="1"/>
</dbReference>
<dbReference type="PIRSF" id="PIRSF004640">
    <property type="entry name" value="IspG"/>
    <property type="match status" value="1"/>
</dbReference>
<dbReference type="SUPFAM" id="SSF56014">
    <property type="entry name" value="Nitrite and sulphite reductase 4Fe-4S domain-like"/>
    <property type="match status" value="1"/>
</dbReference>
<comment type="function">
    <text evidence="1">Converts 2C-methyl-D-erythritol 2,4-cyclodiphosphate (ME-2,4cPP) into 1-hydroxy-2-methyl-2-(E)-butenyl 4-diphosphate.</text>
</comment>
<comment type="catalytic activity">
    <reaction evidence="1">
        <text>(2E)-4-hydroxy-3-methylbut-2-enyl diphosphate + oxidized [flavodoxin] + H2O + 2 H(+) = 2-C-methyl-D-erythritol 2,4-cyclic diphosphate + reduced [flavodoxin]</text>
        <dbReference type="Rhea" id="RHEA:43604"/>
        <dbReference type="Rhea" id="RHEA-COMP:10622"/>
        <dbReference type="Rhea" id="RHEA-COMP:10623"/>
        <dbReference type="ChEBI" id="CHEBI:15377"/>
        <dbReference type="ChEBI" id="CHEBI:15378"/>
        <dbReference type="ChEBI" id="CHEBI:57618"/>
        <dbReference type="ChEBI" id="CHEBI:58210"/>
        <dbReference type="ChEBI" id="CHEBI:58483"/>
        <dbReference type="ChEBI" id="CHEBI:128753"/>
        <dbReference type="EC" id="1.17.7.3"/>
    </reaction>
</comment>
<comment type="cofactor">
    <cofactor evidence="1">
        <name>[4Fe-4S] cluster</name>
        <dbReference type="ChEBI" id="CHEBI:49883"/>
    </cofactor>
    <text evidence="1">Binds 1 [4Fe-4S] cluster.</text>
</comment>
<comment type="pathway">
    <text evidence="1">Isoprenoid biosynthesis; isopentenyl diphosphate biosynthesis via DXP pathway; isopentenyl diphosphate from 1-deoxy-D-xylulose 5-phosphate: step 5/6.</text>
</comment>
<comment type="similarity">
    <text evidence="1">Belongs to the IspG family.</text>
</comment>
<accession>A1KUD8</accession>
<gene>
    <name evidence="1" type="primary">ispG</name>
    <name type="ordered locus">NMC1247</name>
</gene>
<proteinExistence type="inferred from homology"/>